<reference key="1">
    <citation type="submission" date="2007-11" db="EMBL/GenBank/DDBJ databases">
        <title>The genome sequence of the hyperthermophilic bacterium Thermotoga neapolitana.</title>
        <authorList>
            <person name="Lim S.K."/>
            <person name="Kim J.S."/>
            <person name="Cha S.H."/>
            <person name="Park B.C."/>
            <person name="Lee D.S."/>
            <person name="Tae H.S."/>
            <person name="Kim S.-J."/>
            <person name="Kim J.J."/>
            <person name="Park K.J."/>
            <person name="Lee S.Y."/>
        </authorList>
    </citation>
    <scope>NUCLEOTIDE SEQUENCE [LARGE SCALE GENOMIC DNA]</scope>
    <source>
        <strain>ATCC 49049 / DSM 4359 / NBRC 107923 / NS-E</strain>
    </source>
</reference>
<accession>B9K895</accession>
<name>RS17_THENN</name>
<dbReference type="EMBL" id="CP000916">
    <property type="protein sequence ID" value="ACM23178.1"/>
    <property type="molecule type" value="Genomic_DNA"/>
</dbReference>
<dbReference type="RefSeq" id="WP_015919495.1">
    <property type="nucleotide sequence ID" value="NC_011978.1"/>
</dbReference>
<dbReference type="SMR" id="B9K895"/>
<dbReference type="STRING" id="309803.CTN_1002"/>
<dbReference type="KEGG" id="tna:CTN_1002"/>
<dbReference type="eggNOG" id="COG0186">
    <property type="taxonomic scope" value="Bacteria"/>
</dbReference>
<dbReference type="HOGENOM" id="CLU_073626_1_2_0"/>
<dbReference type="Proteomes" id="UP000000445">
    <property type="component" value="Chromosome"/>
</dbReference>
<dbReference type="GO" id="GO:0022627">
    <property type="term" value="C:cytosolic small ribosomal subunit"/>
    <property type="evidence" value="ECO:0007669"/>
    <property type="project" value="TreeGrafter"/>
</dbReference>
<dbReference type="GO" id="GO:0019843">
    <property type="term" value="F:rRNA binding"/>
    <property type="evidence" value="ECO:0007669"/>
    <property type="project" value="UniProtKB-UniRule"/>
</dbReference>
<dbReference type="GO" id="GO:0003735">
    <property type="term" value="F:structural constituent of ribosome"/>
    <property type="evidence" value="ECO:0007669"/>
    <property type="project" value="InterPro"/>
</dbReference>
<dbReference type="GO" id="GO:0006412">
    <property type="term" value="P:translation"/>
    <property type="evidence" value="ECO:0007669"/>
    <property type="project" value="UniProtKB-UniRule"/>
</dbReference>
<dbReference type="CDD" id="cd00364">
    <property type="entry name" value="Ribosomal_uS17"/>
    <property type="match status" value="1"/>
</dbReference>
<dbReference type="FunFam" id="2.40.50.140:FF:000204">
    <property type="entry name" value="30S ribosomal protein S17"/>
    <property type="match status" value="1"/>
</dbReference>
<dbReference type="Gene3D" id="2.40.50.140">
    <property type="entry name" value="Nucleic acid-binding proteins"/>
    <property type="match status" value="1"/>
</dbReference>
<dbReference type="HAMAP" id="MF_01345_B">
    <property type="entry name" value="Ribosomal_uS17_B"/>
    <property type="match status" value="1"/>
</dbReference>
<dbReference type="InterPro" id="IPR012340">
    <property type="entry name" value="NA-bd_OB-fold"/>
</dbReference>
<dbReference type="InterPro" id="IPR000266">
    <property type="entry name" value="Ribosomal_uS17"/>
</dbReference>
<dbReference type="InterPro" id="IPR019984">
    <property type="entry name" value="Ribosomal_uS17_bact/chlr"/>
</dbReference>
<dbReference type="InterPro" id="IPR019979">
    <property type="entry name" value="Ribosomal_uS17_CS"/>
</dbReference>
<dbReference type="NCBIfam" id="NF004123">
    <property type="entry name" value="PRK05610.1"/>
    <property type="match status" value="1"/>
</dbReference>
<dbReference type="NCBIfam" id="TIGR03635">
    <property type="entry name" value="uS17_bact"/>
    <property type="match status" value="1"/>
</dbReference>
<dbReference type="PANTHER" id="PTHR10744">
    <property type="entry name" value="40S RIBOSOMAL PROTEIN S11 FAMILY MEMBER"/>
    <property type="match status" value="1"/>
</dbReference>
<dbReference type="PANTHER" id="PTHR10744:SF1">
    <property type="entry name" value="SMALL RIBOSOMAL SUBUNIT PROTEIN US17M"/>
    <property type="match status" value="1"/>
</dbReference>
<dbReference type="Pfam" id="PF00366">
    <property type="entry name" value="Ribosomal_S17"/>
    <property type="match status" value="1"/>
</dbReference>
<dbReference type="PRINTS" id="PR00973">
    <property type="entry name" value="RIBOSOMALS17"/>
</dbReference>
<dbReference type="SUPFAM" id="SSF50249">
    <property type="entry name" value="Nucleic acid-binding proteins"/>
    <property type="match status" value="1"/>
</dbReference>
<dbReference type="PROSITE" id="PS00056">
    <property type="entry name" value="RIBOSOMAL_S17"/>
    <property type="match status" value="1"/>
</dbReference>
<feature type="chain" id="PRO_1000166504" description="Small ribosomal subunit protein uS17">
    <location>
        <begin position="1"/>
        <end position="112"/>
    </location>
</feature>
<gene>
    <name evidence="1" type="primary">rpsQ</name>
    <name type="ordered locus">CTN_1002</name>
</gene>
<comment type="function">
    <text evidence="1">One of the primary rRNA binding proteins, it binds specifically to the 5'-end of 16S ribosomal RNA.</text>
</comment>
<comment type="subunit">
    <text evidence="1">Part of the 30S ribosomal subunit.</text>
</comment>
<comment type="similarity">
    <text evidence="1">Belongs to the universal ribosomal protein uS17 family.</text>
</comment>
<keyword id="KW-0687">Ribonucleoprotein</keyword>
<keyword id="KW-0689">Ribosomal protein</keyword>
<keyword id="KW-0694">RNA-binding</keyword>
<keyword id="KW-0699">rRNA-binding</keyword>
<organism>
    <name type="scientific">Thermotoga neapolitana (strain ATCC 49049 / DSM 4359 / NBRC 107923 / NS-E)</name>
    <dbReference type="NCBI Taxonomy" id="309803"/>
    <lineage>
        <taxon>Bacteria</taxon>
        <taxon>Thermotogati</taxon>
        <taxon>Thermotogota</taxon>
        <taxon>Thermotogae</taxon>
        <taxon>Thermotogales</taxon>
        <taxon>Thermotogaceae</taxon>
        <taxon>Thermotoga</taxon>
    </lineage>
</organism>
<sequence length="112" mass="13282">MPRKRMIGVVVSDKMDKTVVVAVERHVQHPLYKKYIKRTKKYHAHDEKNECRVGDVVEIEETRPLSKTKRWRVVKIIKRFEPERILKEEEEVQDELEEIEGEVVEEKGGAES</sequence>
<protein>
    <recommendedName>
        <fullName evidence="1">Small ribosomal subunit protein uS17</fullName>
    </recommendedName>
    <alternativeName>
        <fullName evidence="2">30S ribosomal protein S17</fullName>
    </alternativeName>
</protein>
<proteinExistence type="inferred from homology"/>
<evidence type="ECO:0000255" key="1">
    <source>
        <dbReference type="HAMAP-Rule" id="MF_01345"/>
    </source>
</evidence>
<evidence type="ECO:0000305" key="2"/>